<organism>
    <name type="scientific">Shewanella frigidimarina (strain NCIMB 400)</name>
    <dbReference type="NCBI Taxonomy" id="318167"/>
    <lineage>
        <taxon>Bacteria</taxon>
        <taxon>Pseudomonadati</taxon>
        <taxon>Pseudomonadota</taxon>
        <taxon>Gammaproteobacteria</taxon>
        <taxon>Alteromonadales</taxon>
        <taxon>Shewanellaceae</taxon>
        <taxon>Shewanella</taxon>
    </lineage>
</organism>
<keyword id="KW-0378">Hydrolase</keyword>
<keyword id="KW-0441">Lipid A biosynthesis</keyword>
<keyword id="KW-0444">Lipid biosynthesis</keyword>
<keyword id="KW-0443">Lipid metabolism</keyword>
<keyword id="KW-0479">Metal-binding</keyword>
<keyword id="KW-1185">Reference proteome</keyword>
<keyword id="KW-0862">Zinc</keyword>
<gene>
    <name evidence="1" type="primary">lpxC</name>
    <name type="ordered locus">Sfri_3799</name>
</gene>
<feature type="chain" id="PRO_1000013229" description="UDP-3-O-acyl-N-acetylglucosamine deacetylase">
    <location>
        <begin position="1"/>
        <end position="306"/>
    </location>
</feature>
<feature type="active site" description="Proton donor" evidence="1">
    <location>
        <position position="265"/>
    </location>
</feature>
<feature type="binding site" evidence="1">
    <location>
        <position position="79"/>
    </location>
    <ligand>
        <name>Zn(2+)</name>
        <dbReference type="ChEBI" id="CHEBI:29105"/>
    </ligand>
</feature>
<feature type="binding site" evidence="1">
    <location>
        <position position="238"/>
    </location>
    <ligand>
        <name>Zn(2+)</name>
        <dbReference type="ChEBI" id="CHEBI:29105"/>
    </ligand>
</feature>
<feature type="binding site" evidence="1">
    <location>
        <position position="242"/>
    </location>
    <ligand>
        <name>Zn(2+)</name>
        <dbReference type="ChEBI" id="CHEBI:29105"/>
    </ligand>
</feature>
<dbReference type="EC" id="3.5.1.108" evidence="1"/>
<dbReference type="EMBL" id="CP000447">
    <property type="protein sequence ID" value="ABI73624.1"/>
    <property type="molecule type" value="Genomic_DNA"/>
</dbReference>
<dbReference type="RefSeq" id="WP_011639209.1">
    <property type="nucleotide sequence ID" value="NC_008345.1"/>
</dbReference>
<dbReference type="SMR" id="Q07WJ0"/>
<dbReference type="STRING" id="318167.Sfri_3799"/>
<dbReference type="KEGG" id="sfr:Sfri_3799"/>
<dbReference type="eggNOG" id="COG0774">
    <property type="taxonomic scope" value="Bacteria"/>
</dbReference>
<dbReference type="HOGENOM" id="CLU_046528_1_0_6"/>
<dbReference type="OrthoDB" id="9802746at2"/>
<dbReference type="UniPathway" id="UPA00359">
    <property type="reaction ID" value="UER00478"/>
</dbReference>
<dbReference type="Proteomes" id="UP000000684">
    <property type="component" value="Chromosome"/>
</dbReference>
<dbReference type="GO" id="GO:0016020">
    <property type="term" value="C:membrane"/>
    <property type="evidence" value="ECO:0007669"/>
    <property type="project" value="GOC"/>
</dbReference>
<dbReference type="GO" id="GO:0046872">
    <property type="term" value="F:metal ion binding"/>
    <property type="evidence" value="ECO:0007669"/>
    <property type="project" value="UniProtKB-KW"/>
</dbReference>
<dbReference type="GO" id="GO:0103117">
    <property type="term" value="F:UDP-3-O-acyl-N-acetylglucosamine deacetylase activity"/>
    <property type="evidence" value="ECO:0007669"/>
    <property type="project" value="UniProtKB-UniRule"/>
</dbReference>
<dbReference type="GO" id="GO:0009245">
    <property type="term" value="P:lipid A biosynthetic process"/>
    <property type="evidence" value="ECO:0007669"/>
    <property type="project" value="UniProtKB-UniRule"/>
</dbReference>
<dbReference type="Gene3D" id="3.30.230.20">
    <property type="entry name" value="lpxc deacetylase, domain 1"/>
    <property type="match status" value="1"/>
</dbReference>
<dbReference type="Gene3D" id="3.30.1700.10">
    <property type="entry name" value="lpxc deacetylase, domain 2"/>
    <property type="match status" value="1"/>
</dbReference>
<dbReference type="HAMAP" id="MF_00388">
    <property type="entry name" value="LpxC"/>
    <property type="match status" value="1"/>
</dbReference>
<dbReference type="InterPro" id="IPR020568">
    <property type="entry name" value="Ribosomal_Su5_D2-typ_SF"/>
</dbReference>
<dbReference type="InterPro" id="IPR004463">
    <property type="entry name" value="UDP-acyl_GlcNac_deAcase"/>
</dbReference>
<dbReference type="InterPro" id="IPR011334">
    <property type="entry name" value="UDP-acyl_GlcNac_deAcase_C"/>
</dbReference>
<dbReference type="InterPro" id="IPR015870">
    <property type="entry name" value="UDP-acyl_N-AcGlcN_deAcase_N"/>
</dbReference>
<dbReference type="NCBIfam" id="TIGR00325">
    <property type="entry name" value="lpxC"/>
    <property type="match status" value="1"/>
</dbReference>
<dbReference type="PANTHER" id="PTHR33694">
    <property type="entry name" value="UDP-3-O-ACYL-N-ACETYLGLUCOSAMINE DEACETYLASE 1, MITOCHONDRIAL-RELATED"/>
    <property type="match status" value="1"/>
</dbReference>
<dbReference type="PANTHER" id="PTHR33694:SF1">
    <property type="entry name" value="UDP-3-O-ACYL-N-ACETYLGLUCOSAMINE DEACETYLASE 1, MITOCHONDRIAL-RELATED"/>
    <property type="match status" value="1"/>
</dbReference>
<dbReference type="Pfam" id="PF03331">
    <property type="entry name" value="LpxC"/>
    <property type="match status" value="1"/>
</dbReference>
<dbReference type="SUPFAM" id="SSF54211">
    <property type="entry name" value="Ribosomal protein S5 domain 2-like"/>
    <property type="match status" value="2"/>
</dbReference>
<sequence>MIFQRTVQKMVKSTGVGLHSGNKVTLCIMPAPVNTGIVLKRTDLSPAVSIPAKADMVRETTMCTALVNDAGIRISTIEHLFAALAGLGIDNAIIEVDAPEIPIMDGSASPFVFLLQSAGIKEQAAAKKYLKIIKPVRVEDGDKWAELKPFKGFRVDFRIDFDHPEIARSQQHMVMDFSTSAFVKDISRARTFGFMRDIEYLRANNLALGGSMENAVVLDEYRVLNPDGLRYEDEFVKHKILDAFGDLYVAGHAIVGEFSAYKTGHALNNQLVRALLAQQDAWELVSFDKEADVPVSFMVPGALAHV</sequence>
<comment type="function">
    <text evidence="1">Catalyzes the hydrolysis of UDP-3-O-myristoyl-N-acetylglucosamine to form UDP-3-O-myristoylglucosamine and acetate, the committed step in lipid A biosynthesis.</text>
</comment>
<comment type="catalytic activity">
    <reaction evidence="1">
        <text>a UDP-3-O-[(3R)-3-hydroxyacyl]-N-acetyl-alpha-D-glucosamine + H2O = a UDP-3-O-[(3R)-3-hydroxyacyl]-alpha-D-glucosamine + acetate</text>
        <dbReference type="Rhea" id="RHEA:67816"/>
        <dbReference type="ChEBI" id="CHEBI:15377"/>
        <dbReference type="ChEBI" id="CHEBI:30089"/>
        <dbReference type="ChEBI" id="CHEBI:137740"/>
        <dbReference type="ChEBI" id="CHEBI:173225"/>
        <dbReference type="EC" id="3.5.1.108"/>
    </reaction>
</comment>
<comment type="cofactor">
    <cofactor evidence="1">
        <name>Zn(2+)</name>
        <dbReference type="ChEBI" id="CHEBI:29105"/>
    </cofactor>
</comment>
<comment type="pathway">
    <text evidence="1">Glycolipid biosynthesis; lipid IV(A) biosynthesis; lipid IV(A) from (3R)-3-hydroxytetradecanoyl-[acyl-carrier-protein] and UDP-N-acetyl-alpha-D-glucosamine: step 2/6.</text>
</comment>
<comment type="similarity">
    <text evidence="1">Belongs to the LpxC family.</text>
</comment>
<evidence type="ECO:0000255" key="1">
    <source>
        <dbReference type="HAMAP-Rule" id="MF_00388"/>
    </source>
</evidence>
<proteinExistence type="inferred from homology"/>
<name>LPXC_SHEFN</name>
<accession>Q07WJ0</accession>
<protein>
    <recommendedName>
        <fullName evidence="1">UDP-3-O-acyl-N-acetylglucosamine deacetylase</fullName>
        <shortName evidence="1">UDP-3-O-acyl-GlcNAc deacetylase</shortName>
        <ecNumber evidence="1">3.5.1.108</ecNumber>
    </recommendedName>
    <alternativeName>
        <fullName evidence="1">UDP-3-O-[R-3-hydroxymyristoyl]-N-acetylglucosamine deacetylase</fullName>
    </alternativeName>
</protein>
<reference key="1">
    <citation type="submission" date="2006-08" db="EMBL/GenBank/DDBJ databases">
        <title>Complete sequence of Shewanella frigidimarina NCIMB 400.</title>
        <authorList>
            <consortium name="US DOE Joint Genome Institute"/>
            <person name="Copeland A."/>
            <person name="Lucas S."/>
            <person name="Lapidus A."/>
            <person name="Barry K."/>
            <person name="Detter J.C."/>
            <person name="Glavina del Rio T."/>
            <person name="Hammon N."/>
            <person name="Israni S."/>
            <person name="Dalin E."/>
            <person name="Tice H."/>
            <person name="Pitluck S."/>
            <person name="Fredrickson J.K."/>
            <person name="Kolker E."/>
            <person name="McCuel L.A."/>
            <person name="DiChristina T."/>
            <person name="Nealson K.H."/>
            <person name="Newman D."/>
            <person name="Tiedje J.M."/>
            <person name="Zhou J."/>
            <person name="Romine M.F."/>
            <person name="Culley D.E."/>
            <person name="Serres M."/>
            <person name="Chertkov O."/>
            <person name="Brettin T."/>
            <person name="Bruce D."/>
            <person name="Han C."/>
            <person name="Tapia R."/>
            <person name="Gilna P."/>
            <person name="Schmutz J."/>
            <person name="Larimer F."/>
            <person name="Land M."/>
            <person name="Hauser L."/>
            <person name="Kyrpides N."/>
            <person name="Mikhailova N."/>
            <person name="Richardson P."/>
        </authorList>
    </citation>
    <scope>NUCLEOTIDE SEQUENCE [LARGE SCALE GENOMIC DNA]</scope>
    <source>
        <strain>NCIMB 400</strain>
    </source>
</reference>